<evidence type="ECO:0000250" key="1"/>
<evidence type="ECO:0000250" key="2">
    <source>
        <dbReference type="UniProtKB" id="Q6Q783"/>
    </source>
</evidence>
<evidence type="ECO:0000250" key="3">
    <source>
        <dbReference type="UniProtKB" id="Q86Y97"/>
    </source>
</evidence>
<evidence type="ECO:0000255" key="4">
    <source>
        <dbReference type="PROSITE-ProRule" id="PRU00190"/>
    </source>
</evidence>
<evidence type="ECO:0000255" key="5">
    <source>
        <dbReference type="PROSITE-ProRule" id="PRU00903"/>
    </source>
</evidence>
<evidence type="ECO:0000269" key="6">
    <source>
    </source>
</evidence>
<evidence type="ECO:0000269" key="7">
    <source>
    </source>
</evidence>
<evidence type="ECO:0000305" key="8"/>
<evidence type="ECO:0000312" key="9">
    <source>
        <dbReference type="RGD" id="1305226"/>
    </source>
</evidence>
<keyword id="KW-0156">Chromatin regulator</keyword>
<keyword id="KW-0158">Chromosome</keyword>
<keyword id="KW-0479">Metal-binding</keyword>
<keyword id="KW-0489">Methyltransferase</keyword>
<keyword id="KW-0539">Nucleus</keyword>
<keyword id="KW-1185">Reference proteome</keyword>
<keyword id="KW-0678">Repressor</keyword>
<keyword id="KW-0949">S-adenosyl-L-methionine</keyword>
<keyword id="KW-0804">Transcription</keyword>
<keyword id="KW-0805">Transcription regulation</keyword>
<keyword id="KW-0808">Transferase</keyword>
<keyword id="KW-0862">Zinc</keyword>
<feature type="chain" id="PRO_0000281795" description="Histone-lysine N-methyltransferase KMT5C">
    <location>
        <begin position="1"/>
        <end position="470"/>
    </location>
</feature>
<feature type="domain" description="SET" evidence="4">
    <location>
        <begin position="104"/>
        <end position="218"/>
    </location>
</feature>
<feature type="region of interest" description="Required for heterochromatin localization" evidence="1">
    <location>
        <begin position="350"/>
        <end position="443"/>
    </location>
</feature>
<feature type="binding site" evidence="3">
    <location>
        <position position="32"/>
    </location>
    <ligand>
        <name>S-adenosyl-L-methionine</name>
        <dbReference type="ChEBI" id="CHEBI:59789"/>
    </ligand>
</feature>
<feature type="binding site" evidence="3">
    <location>
        <begin position="114"/>
        <end position="117"/>
    </location>
    <ligand>
        <name>S-adenosyl-L-methionine</name>
        <dbReference type="ChEBI" id="CHEBI:59789"/>
    </ligand>
</feature>
<feature type="binding site" evidence="3">
    <location>
        <position position="121"/>
    </location>
    <ligand>
        <name>S-adenosyl-L-methionine</name>
        <dbReference type="ChEBI" id="CHEBI:59789"/>
    </ligand>
</feature>
<feature type="binding site" evidence="3">
    <location>
        <position position="160"/>
    </location>
    <ligand>
        <name>S-adenosyl-L-methionine</name>
        <dbReference type="ChEBI" id="CHEBI:59789"/>
    </ligand>
</feature>
<feature type="binding site" evidence="3">
    <location>
        <position position="169"/>
    </location>
    <ligand>
        <name>S-adenosyl-L-methionine</name>
        <dbReference type="ChEBI" id="CHEBI:59789"/>
    </ligand>
</feature>
<feature type="binding site" evidence="3">
    <location>
        <begin position="182"/>
        <end position="183"/>
    </location>
    <ligand>
        <name>S-adenosyl-L-methionine</name>
        <dbReference type="ChEBI" id="CHEBI:59789"/>
    </ligand>
</feature>
<feature type="binding site" evidence="3">
    <location>
        <position position="185"/>
    </location>
    <ligand>
        <name>Zn(2+)</name>
        <dbReference type="ChEBI" id="CHEBI:29105"/>
    </ligand>
</feature>
<feature type="binding site" evidence="3">
    <location>
        <position position="229"/>
    </location>
    <ligand>
        <name>Zn(2+)</name>
        <dbReference type="ChEBI" id="CHEBI:29105"/>
    </ligand>
</feature>
<feature type="binding site" evidence="3">
    <location>
        <position position="230"/>
    </location>
    <ligand>
        <name>S-adenosyl-L-methionine</name>
        <dbReference type="ChEBI" id="CHEBI:59789"/>
    </ligand>
</feature>
<feature type="binding site" evidence="3">
    <location>
        <position position="231"/>
    </location>
    <ligand>
        <name>Zn(2+)</name>
        <dbReference type="ChEBI" id="CHEBI:29105"/>
    </ligand>
</feature>
<feature type="binding site" evidence="3">
    <location>
        <position position="234"/>
    </location>
    <ligand>
        <name>Zn(2+)</name>
        <dbReference type="ChEBI" id="CHEBI:29105"/>
    </ligand>
</feature>
<comment type="function">
    <text evidence="2 3">Histone methyltransferase that specifically methylates monomethylated 'Lys-20' (H4K20me1) and dimethylated 'Lys-20' (H4K20me2) of histone H4 to produce respectively dimethylated 'Lys-20' (H4K20me2) and trimethylated 'Lys-20' (H4K20me3) and thus regulates transcription and maintenance of genome integrity. In vitro also methylates unmodified 'Lys-20' (H4K20me0) of histone H4 and nucleosomes (By similarity). H4 'Lys-20' trimethylation represents a specific tag for epigenetic transcriptional repression. Mainly functions in pericentric heterochromatin regions, thereby playing a central role in the establishment of constitutive heterochromatin in these regions. KMT5C is targeted to histone H3 via its interaction with RB1 family proteins (RB1, RBL1 and RBL2) (By similarity). Facilitates TP53BP1 foci formation upon DNA damage and proficient non-homologous end-joining (NHEJ)-directed DNA repair by catalyzing the di- and trimethylation of 'Lys-20' of histone H4 (By similarity). May play a role in class switch reconbination by catalyzing the di- and trimethylation of 'Lys-20' of histone H4 (By similarity).</text>
</comment>
<comment type="catalytic activity">
    <reaction evidence="3">
        <text>N(6)-methyl-L-lysyl(20)-[histone H4] + S-adenosyl-L-methionine = N(6),N(6)-dimethyl-L-lysyl(20)-[histone H4] + S-adenosyl-L-homocysteine + H(+)</text>
        <dbReference type="Rhea" id="RHEA:60348"/>
        <dbReference type="Rhea" id="RHEA-COMP:15555"/>
        <dbReference type="Rhea" id="RHEA-COMP:15556"/>
        <dbReference type="ChEBI" id="CHEBI:15378"/>
        <dbReference type="ChEBI" id="CHEBI:57856"/>
        <dbReference type="ChEBI" id="CHEBI:59789"/>
        <dbReference type="ChEBI" id="CHEBI:61929"/>
        <dbReference type="ChEBI" id="CHEBI:61976"/>
        <dbReference type="EC" id="2.1.1.362"/>
    </reaction>
    <physiologicalReaction direction="left-to-right" evidence="3">
        <dbReference type="Rhea" id="RHEA:60349"/>
    </physiologicalReaction>
</comment>
<comment type="catalytic activity">
    <reaction evidence="3">
        <text>N(6),N(6)-dimethyl-L-lysyl(20)-[histone H4] + S-adenosyl-L-methionine = N(6),N(6),N(6)-trimethyl-L-lysyl(20)-[histone H4] + S-adenosyl-L-homocysteine + H(+)</text>
        <dbReference type="Rhea" id="RHEA:61992"/>
        <dbReference type="Rhea" id="RHEA-COMP:15556"/>
        <dbReference type="Rhea" id="RHEA-COMP:15998"/>
        <dbReference type="ChEBI" id="CHEBI:15378"/>
        <dbReference type="ChEBI" id="CHEBI:57856"/>
        <dbReference type="ChEBI" id="CHEBI:59789"/>
        <dbReference type="ChEBI" id="CHEBI:61961"/>
        <dbReference type="ChEBI" id="CHEBI:61976"/>
    </reaction>
    <physiologicalReaction direction="left-to-right" evidence="3">
        <dbReference type="Rhea" id="RHEA:61993"/>
    </physiologicalReaction>
</comment>
<comment type="catalytic activity">
    <reaction evidence="3">
        <text>L-lysyl(20)-[histone H4] + S-adenosyl-L-methionine = N(6)-methyl-L-lysyl(20)-[histone H4] + S-adenosyl-L-homocysteine + H(+)</text>
        <dbReference type="Rhea" id="RHEA:60344"/>
        <dbReference type="Rhea" id="RHEA-COMP:15554"/>
        <dbReference type="Rhea" id="RHEA-COMP:15555"/>
        <dbReference type="ChEBI" id="CHEBI:15378"/>
        <dbReference type="ChEBI" id="CHEBI:29969"/>
        <dbReference type="ChEBI" id="CHEBI:57856"/>
        <dbReference type="ChEBI" id="CHEBI:59789"/>
        <dbReference type="ChEBI" id="CHEBI:61929"/>
        <dbReference type="EC" id="2.1.1.361"/>
    </reaction>
</comment>
<comment type="activity regulation">
    <text evidence="3">Inhibited by 6,7-Dichloro-N-cyclopentyl-4-(pyridin-4-yl)phthalazin-1-amine (A-196).</text>
</comment>
<comment type="subunit">
    <text evidence="2">Homodimer (By similarity). Interacts with HP1 proteins CBX1, CBX3 and CBX5. Interacts with RB1 family proteins RB1, RBL1 and RBL2 (By similarity).</text>
</comment>
<comment type="subcellular location">
    <subcellularLocation>
        <location>Nucleus</location>
    </subcellularLocation>
    <subcellularLocation>
        <location>Chromosome</location>
    </subcellularLocation>
    <text>Associated with pericentric heterochromatin. CBX1 and CBX5 are required for the localization to pericentric heterochromatin.</text>
</comment>
<comment type="induction">
    <text evidence="6 7">Strongly down-regulated in various cancers such as hepatocarcinomas.</text>
</comment>
<comment type="similarity">
    <text evidence="5">Belongs to the class V-like SAM-binding methyltransferase superfamily. Histone-lysine methyltransferase family. Suvar4-20 subfamily.</text>
</comment>
<name>KMT5C_RAT</name>
<dbReference type="EC" id="2.1.1.362" evidence="3"/>
<dbReference type="EC" id="2.1.1.361" evidence="3"/>
<dbReference type="EMBL" id="AY724526">
    <property type="status" value="NOT_ANNOTATED_CDS"/>
    <property type="molecule type" value="mRNA"/>
</dbReference>
<dbReference type="RefSeq" id="NP_001100945.1">
    <property type="nucleotide sequence ID" value="NM_001107475.1"/>
</dbReference>
<dbReference type="RefSeq" id="XP_006228321.1">
    <property type="nucleotide sequence ID" value="XM_006228259.1"/>
</dbReference>
<dbReference type="RefSeq" id="XP_006228322.1">
    <property type="nucleotide sequence ID" value="XM_006228260.1"/>
</dbReference>
<dbReference type="RefSeq" id="XP_006228323.1">
    <property type="nucleotide sequence ID" value="XM_006228261.1"/>
</dbReference>
<dbReference type="RefSeq" id="XP_006228325.1">
    <property type="nucleotide sequence ID" value="XM_006228263.1"/>
</dbReference>
<dbReference type="RefSeq" id="XP_006228326.1">
    <property type="nucleotide sequence ID" value="XM_006228264.1"/>
</dbReference>
<dbReference type="RefSeq" id="XP_006228327.1">
    <property type="nucleotide sequence ID" value="XM_006228265.3"/>
</dbReference>
<dbReference type="RefSeq" id="XP_006228328.1">
    <property type="nucleotide sequence ID" value="XM_006228266.1"/>
</dbReference>
<dbReference type="SMR" id="P0C2N6"/>
<dbReference type="FunCoup" id="P0C2N6">
    <property type="interactions" value="830"/>
</dbReference>
<dbReference type="STRING" id="10116.ENSRNOP00000023744"/>
<dbReference type="GlyGen" id="P0C2N6">
    <property type="glycosylation" value="2 sites"/>
</dbReference>
<dbReference type="iPTMnet" id="P0C2N6"/>
<dbReference type="PhosphoSitePlus" id="P0C2N6"/>
<dbReference type="PaxDb" id="10116-ENSRNOP00000023744"/>
<dbReference type="Ensembl" id="ENSRNOT00000023744.6">
    <property type="protein sequence ID" value="ENSRNOP00000023744.5"/>
    <property type="gene ID" value="ENSRNOG00000017508.6"/>
</dbReference>
<dbReference type="GeneID" id="308345"/>
<dbReference type="KEGG" id="rno:308345"/>
<dbReference type="UCSC" id="RGD:1305226">
    <property type="organism name" value="rat"/>
</dbReference>
<dbReference type="AGR" id="RGD:1305226"/>
<dbReference type="CTD" id="84787"/>
<dbReference type="RGD" id="1305226">
    <property type="gene designation" value="Kmt5c"/>
</dbReference>
<dbReference type="eggNOG" id="KOG2589">
    <property type="taxonomic scope" value="Eukaryota"/>
</dbReference>
<dbReference type="GeneTree" id="ENSGT00940000161700"/>
<dbReference type="HOGENOM" id="CLU_040002_0_0_1"/>
<dbReference type="InParanoid" id="P0C2N6"/>
<dbReference type="OMA" id="GCGPHCC"/>
<dbReference type="OrthoDB" id="6627536at2759"/>
<dbReference type="PhylomeDB" id="P0C2N6"/>
<dbReference type="TreeFam" id="TF106433"/>
<dbReference type="Reactome" id="R-RNO-3214841">
    <property type="pathway name" value="PKMTs methylate histone lysines"/>
</dbReference>
<dbReference type="PRO" id="PR:P0C2N6"/>
<dbReference type="Proteomes" id="UP000002494">
    <property type="component" value="Chromosome 1"/>
</dbReference>
<dbReference type="Bgee" id="ENSRNOG00000017508">
    <property type="expression patterns" value="Expressed in ovary and 20 other cell types or tissues"/>
</dbReference>
<dbReference type="GO" id="GO:0000779">
    <property type="term" value="C:condensed chromosome, centromeric region"/>
    <property type="evidence" value="ECO:0000266"/>
    <property type="project" value="RGD"/>
</dbReference>
<dbReference type="GO" id="GO:0000792">
    <property type="term" value="C:heterochromatin"/>
    <property type="evidence" value="ECO:0000266"/>
    <property type="project" value="RGD"/>
</dbReference>
<dbReference type="GO" id="GO:0005654">
    <property type="term" value="C:nucleoplasm"/>
    <property type="evidence" value="ECO:0007669"/>
    <property type="project" value="Ensembl"/>
</dbReference>
<dbReference type="GO" id="GO:0005634">
    <property type="term" value="C:nucleus"/>
    <property type="evidence" value="ECO:0000318"/>
    <property type="project" value="GO_Central"/>
</dbReference>
<dbReference type="GO" id="GO:0005721">
    <property type="term" value="C:pericentric heterochromatin"/>
    <property type="evidence" value="ECO:0000266"/>
    <property type="project" value="RGD"/>
</dbReference>
<dbReference type="GO" id="GO:0003682">
    <property type="term" value="F:chromatin binding"/>
    <property type="evidence" value="ECO:0000250"/>
    <property type="project" value="UniProtKB"/>
</dbReference>
<dbReference type="GO" id="GO:0042393">
    <property type="term" value="F:histone binding"/>
    <property type="evidence" value="ECO:0000266"/>
    <property type="project" value="RGD"/>
</dbReference>
<dbReference type="GO" id="GO:0042799">
    <property type="term" value="F:histone H4K20 methyltransferase activity"/>
    <property type="evidence" value="ECO:0000250"/>
    <property type="project" value="UniProtKB"/>
</dbReference>
<dbReference type="GO" id="GO:0140944">
    <property type="term" value="F:histone H4K20 monomethyltransferase activity"/>
    <property type="evidence" value="ECO:0007669"/>
    <property type="project" value="UniProtKB-EC"/>
</dbReference>
<dbReference type="GO" id="GO:0140941">
    <property type="term" value="F:histone H4K20me methyltransferase activity"/>
    <property type="evidence" value="ECO:0007669"/>
    <property type="project" value="UniProtKB-EC"/>
</dbReference>
<dbReference type="GO" id="GO:0046872">
    <property type="term" value="F:metal ion binding"/>
    <property type="evidence" value="ECO:0007669"/>
    <property type="project" value="UniProtKB-KW"/>
</dbReference>
<dbReference type="GO" id="GO:1904047">
    <property type="term" value="F:S-adenosyl-L-methionine binding"/>
    <property type="evidence" value="ECO:0000250"/>
    <property type="project" value="UniProtKB"/>
</dbReference>
<dbReference type="GO" id="GO:0006281">
    <property type="term" value="P:DNA repair"/>
    <property type="evidence" value="ECO:0000250"/>
    <property type="project" value="UniProtKB"/>
</dbReference>
<dbReference type="GO" id="GO:0032259">
    <property type="term" value="P:methylation"/>
    <property type="evidence" value="ECO:0007669"/>
    <property type="project" value="UniProtKB-KW"/>
</dbReference>
<dbReference type="GO" id="GO:2001034">
    <property type="term" value="P:positive regulation of double-strand break repair via nonhomologous end joining"/>
    <property type="evidence" value="ECO:0000250"/>
    <property type="project" value="UniProtKB"/>
</dbReference>
<dbReference type="GO" id="GO:0045830">
    <property type="term" value="P:positive regulation of isotype switching"/>
    <property type="evidence" value="ECO:0000250"/>
    <property type="project" value="UniProtKB"/>
</dbReference>
<dbReference type="CDD" id="cd19185">
    <property type="entry name" value="SET_KMT5C"/>
    <property type="match status" value="1"/>
</dbReference>
<dbReference type="FunFam" id="1.10.10.1700:FF:000001">
    <property type="entry name" value="Histone-lysine N-methyltransferase"/>
    <property type="match status" value="1"/>
</dbReference>
<dbReference type="FunFam" id="2.170.270.10:FF:000006">
    <property type="entry name" value="Histone-lysine N-methyltransferase"/>
    <property type="match status" value="1"/>
</dbReference>
<dbReference type="Gene3D" id="1.10.10.1700">
    <property type="entry name" value="Histone-lysine N-methyltransferase"/>
    <property type="match status" value="1"/>
</dbReference>
<dbReference type="Gene3D" id="2.170.270.10">
    <property type="entry name" value="SET domain"/>
    <property type="match status" value="1"/>
</dbReference>
<dbReference type="InterPro" id="IPR041938">
    <property type="entry name" value="Hist-Lys_N-MTase_N"/>
</dbReference>
<dbReference type="InterPro" id="IPR044425">
    <property type="entry name" value="KMT5C_SET"/>
</dbReference>
<dbReference type="InterPro" id="IPR001214">
    <property type="entry name" value="SET_dom"/>
</dbReference>
<dbReference type="InterPro" id="IPR046341">
    <property type="entry name" value="SET_dom_sf"/>
</dbReference>
<dbReference type="InterPro" id="IPR039977">
    <property type="entry name" value="Suv4-20/Set9"/>
</dbReference>
<dbReference type="InterPro" id="IPR025790">
    <property type="entry name" value="Suv4-20_animal"/>
</dbReference>
<dbReference type="PANTHER" id="PTHR12977:SF11">
    <property type="entry name" value="HISTONE-LYSINE N-METHYLTRANSFERASE KMT5C"/>
    <property type="match status" value="1"/>
</dbReference>
<dbReference type="PANTHER" id="PTHR12977">
    <property type="entry name" value="SUPPRESSOR OF VARIEGATION 4-20-RELATED"/>
    <property type="match status" value="1"/>
</dbReference>
<dbReference type="Pfam" id="PF00856">
    <property type="entry name" value="SET"/>
    <property type="match status" value="1"/>
</dbReference>
<dbReference type="SMART" id="SM00317">
    <property type="entry name" value="SET"/>
    <property type="match status" value="1"/>
</dbReference>
<dbReference type="SUPFAM" id="SSF82199">
    <property type="entry name" value="SET domain"/>
    <property type="match status" value="1"/>
</dbReference>
<dbReference type="PROSITE" id="PS51570">
    <property type="entry name" value="SAM_MT43_SUVAR420_2"/>
    <property type="match status" value="1"/>
</dbReference>
<dbReference type="PROSITE" id="PS50280">
    <property type="entry name" value="SET"/>
    <property type="match status" value="1"/>
</dbReference>
<protein>
    <recommendedName>
        <fullName evidence="8">Histone-lysine N-methyltransferase KMT5C</fullName>
        <ecNumber evidence="3">2.1.1.362</ecNumber>
    </recommendedName>
    <alternativeName>
        <fullName evidence="9">Lysine-specific methyltransferase 5C</fullName>
    </alternativeName>
    <alternativeName>
        <fullName>Suppressor of variegation 4-20 homolog 2</fullName>
        <shortName>Su(var)4-20 homolog 2</shortName>
        <shortName>Suv4-20h2</shortName>
    </alternativeName>
    <alternativeName>
        <fullName evidence="8">[histone H4]-N-methyl-L-lysine20 N-methyltransferase KMT5B</fullName>
        <ecNumber evidence="3">2.1.1.362</ecNumber>
    </alternativeName>
    <alternativeName>
        <fullName evidence="8">[histone H4]-lysine20 N-methyltransferase KMT5B</fullName>
        <ecNumber evidence="3">2.1.1.361</ecNumber>
    </alternativeName>
</protein>
<accession>P0C2N6</accession>
<sequence length="470" mass="53607">MGPDRVTARELCENDDLATSLVLDPYLGFRTHKMNVSPVPTLRRQHHLRSALEAFLRQRDLEAAFRALTLGGWMAHYFQNRAPRQEAALKNHIFCYLRAFLPESGFTILPCTRYSMETNGAKIVSTRAWKKNEKLELLVGCIAELREEDEYLLRAGENDFSVMYSTRKRSAQLWLGPAAFINHDCKPNCKFVPSDGNTACVKVLRDIEPGDEVTCFYGEGFFGEKNEHCECYTCERKGEGAFRLQPREPELRPRPLDKYELRETKRRLQQCLDSSQQNLLSLRACSHLSPLRPDPFCAACQPSCLLPVSPHMDYLPLWLQWVPQPQPRVRPRKRRRRRRRRPRIPQASLSPDLHTACVSLHRWGGCGPHCQLRAEAMVTLHLLPQTRWTPKQDWYWARRYGLPSVVRVELSPLAPALPAAPAPAGNLGPTPTPDLIPKQALAFAPFCPPKRLRLVVSHGSIDLDINSGEP</sequence>
<reference key="1">
    <citation type="submission" date="2004-08" db="EMBL/GenBank/DDBJ databases">
        <authorList>
            <person name="Soares M.B."/>
            <person name="Casavant T.L."/>
            <person name="Sheffield V.C."/>
            <person name="Bonaldo M.F."/>
            <person name="Bair T.B."/>
            <person name="Scheetz T.E."/>
            <person name="Snir E."/>
            <person name="Akabogu I."/>
            <person name="Bair J.L."/>
            <person name="Berger B."/>
            <person name="Crouch K."/>
            <person name="Davis A."/>
            <person name="Eystone M.E."/>
            <person name="Keppel C."/>
            <person name="Kucaba T.A."/>
            <person name="Lebeck M."/>
            <person name="Lin J.L."/>
            <person name="de Melo A.I.R."/>
            <person name="Rehmann J."/>
            <person name="Reiter R.S."/>
            <person name="Schaefer K."/>
            <person name="Smith C."/>
            <person name="Tack D."/>
            <person name="Trout K."/>
            <person name="Lin J.J.-C."/>
        </authorList>
    </citation>
    <scope>NUCLEOTIDE SEQUENCE [MRNA]</scope>
</reference>
<reference key="2">
    <citation type="journal article" date="2007" name="J. Nutr.">
        <title>Methyl deficiency, alterations in global histone modifications, and carcinogenesis.</title>
        <authorList>
            <person name="Pogribny I.P."/>
            <person name="Tryndyak V.P."/>
            <person name="Muskhelishvili L."/>
            <person name="Rusyn I."/>
            <person name="Ross S.A."/>
        </authorList>
    </citation>
    <scope>INDUCTION</scope>
</reference>
<reference key="3">
    <citation type="journal article" date="2006" name="Carcinogenesis">
        <title>Histone H3 lysine 9 and H4 lysine 20 trimethylation and the expression of Suv4-20h2 and Suv-39h1 histone methyltransferases in hepatocarcinogenesis induced by methyl deficiency in rats.</title>
        <authorList>
            <person name="Pogribny I.P."/>
            <person name="Ross S.A."/>
            <person name="Tryndyak V.P."/>
            <person name="Pogribna M."/>
            <person name="Poirier L.A."/>
            <person name="Karpinets T.V."/>
        </authorList>
    </citation>
    <scope>INDUCTION</scope>
</reference>
<organism>
    <name type="scientific">Rattus norvegicus</name>
    <name type="common">Rat</name>
    <dbReference type="NCBI Taxonomy" id="10116"/>
    <lineage>
        <taxon>Eukaryota</taxon>
        <taxon>Metazoa</taxon>
        <taxon>Chordata</taxon>
        <taxon>Craniata</taxon>
        <taxon>Vertebrata</taxon>
        <taxon>Euteleostomi</taxon>
        <taxon>Mammalia</taxon>
        <taxon>Eutheria</taxon>
        <taxon>Euarchontoglires</taxon>
        <taxon>Glires</taxon>
        <taxon>Rodentia</taxon>
        <taxon>Myomorpha</taxon>
        <taxon>Muroidea</taxon>
        <taxon>Muridae</taxon>
        <taxon>Murinae</taxon>
        <taxon>Rattus</taxon>
    </lineage>
</organism>
<proteinExistence type="evidence at transcript level"/>
<gene>
    <name evidence="9" type="primary">Kmt5c</name>
    <name type="synonym">Suv420h2</name>
</gene>